<organism>
    <name type="scientific">Bacillus anthracis</name>
    <dbReference type="NCBI Taxonomy" id="1392"/>
    <lineage>
        <taxon>Bacteria</taxon>
        <taxon>Bacillati</taxon>
        <taxon>Bacillota</taxon>
        <taxon>Bacilli</taxon>
        <taxon>Bacillales</taxon>
        <taxon>Bacillaceae</taxon>
        <taxon>Bacillus</taxon>
        <taxon>Bacillus cereus group</taxon>
    </lineage>
</organism>
<accession>Q9RMZ8</accession>
<feature type="chain" id="PRO_0000216848" description="Uncharacterized protein pXO2-34/BXB0033/GBAA_pXO2_0033">
    <location>
        <begin position="1"/>
        <end position="100"/>
    </location>
</feature>
<proteinExistence type="predicted"/>
<keyword id="KW-0614">Plasmid</keyword>
<keyword id="KW-1185">Reference proteome</keyword>
<protein>
    <recommendedName>
        <fullName>Uncharacterized protein pXO2-34/BXB0033/GBAA_pXO2_0033</fullName>
    </recommendedName>
</protein>
<sequence length="100" mass="11537">MREKEFSKSTHRLKVTKEMDIGTLLNRAHKVSTFDGKNLIVLDNGNLYDQAGRREVPVTNMFRYIKSVRNSDGIVIAKKNKPCGKLMQVIFERKAKQKVK</sequence>
<reference key="1">
    <citation type="journal article" date="1999" name="J. Appl. Microbiol.">
        <title>Sequence, assembly and analysis of pXO1 and pXO2.</title>
        <authorList>
            <person name="Okinaka R.T."/>
            <person name="Cloud K."/>
            <person name="Hampton O."/>
            <person name="Hoffmaster A."/>
            <person name="Hill K.K."/>
            <person name="Keim P."/>
            <person name="Koehler T."/>
            <person name="Lamke G."/>
            <person name="Kumano S."/>
            <person name="Manter D."/>
            <person name="Martinez Y."/>
            <person name="Ricke D."/>
            <person name="Svensson R."/>
            <person name="Jackson P.J."/>
        </authorList>
    </citation>
    <scope>NUCLEOTIDE SEQUENCE [GENOMIC DNA]</scope>
    <source>
        <strain>Pasteur</strain>
    </source>
</reference>
<reference key="2">
    <citation type="journal article" date="2002" name="Science">
        <title>Comparative genome sequencing for discovery of novel polymorphisms in Bacillus anthracis.</title>
        <authorList>
            <person name="Read T.D."/>
            <person name="Salzberg S.L."/>
            <person name="Pop M."/>
            <person name="Shumway M.F."/>
            <person name="Umayam L."/>
            <person name="Jiang L."/>
            <person name="Holtzapple E."/>
            <person name="Busch J.D."/>
            <person name="Smith K.L."/>
            <person name="Schupp J.M."/>
            <person name="Solomon D."/>
            <person name="Keim P."/>
            <person name="Fraser C.M."/>
        </authorList>
    </citation>
    <scope>NUCLEOTIDE SEQUENCE [GENOMIC DNA]</scope>
    <source>
        <strain>Ames / isolate Florida / A2012</strain>
    </source>
</reference>
<reference key="3">
    <citation type="journal article" date="2009" name="J. Bacteriol.">
        <title>The complete genome sequence of Bacillus anthracis Ames 'Ancestor'.</title>
        <authorList>
            <person name="Ravel J."/>
            <person name="Jiang L."/>
            <person name="Stanley S.T."/>
            <person name="Wilson M.R."/>
            <person name="Decker R.S."/>
            <person name="Read T.D."/>
            <person name="Worsham P."/>
            <person name="Keim P.S."/>
            <person name="Salzberg S.L."/>
            <person name="Fraser-Liggett C.M."/>
            <person name="Rasko D.A."/>
        </authorList>
    </citation>
    <scope>NUCLEOTIDE SEQUENCE [LARGE SCALE GENOMIC DNA]</scope>
    <source>
        <strain>Ames ancestor</strain>
    </source>
</reference>
<gene>
    <name type="ordered locus">pXO2-34</name>
    <name type="ordered locus">BXB0033</name>
    <name type="ordered locus">GBAA_pXO2_0033</name>
</gene>
<dbReference type="EMBL" id="AF188935">
    <property type="protein sequence ID" value="AAF13639.1"/>
    <property type="molecule type" value="Genomic_DNA"/>
</dbReference>
<dbReference type="EMBL" id="AE011191">
    <property type="protein sequence ID" value="AAM26193.1"/>
    <property type="molecule type" value="Genomic_DNA"/>
</dbReference>
<dbReference type="EMBL" id="AE017335">
    <property type="protein sequence ID" value="AAT28963.2"/>
    <property type="molecule type" value="Genomic_DNA"/>
</dbReference>
<dbReference type="RefSeq" id="NP_053189.1">
    <property type="nucleotide sequence ID" value="NC_002146.1"/>
</dbReference>
<dbReference type="RefSeq" id="WP_001208167.1">
    <property type="nucleotide sequence ID" value="NZ_VTZL01000009.1"/>
</dbReference>
<dbReference type="GeneID" id="45025345"/>
<dbReference type="KEGG" id="banh:HYU01_29175"/>
<dbReference type="KEGG" id="bar:GBAA_pXO2_0033"/>
<dbReference type="HOGENOM" id="CLU_2299962_0_0_9"/>
<dbReference type="OMA" id="MEVKFIK"/>
<dbReference type="Proteomes" id="UP000000594">
    <property type="component" value="Plasmid pXO2"/>
</dbReference>
<dbReference type="InterPro" id="IPR020270">
    <property type="entry name" value="Plasmid_pXO2-34"/>
</dbReference>
<dbReference type="Pfam" id="PF17362">
    <property type="entry name" value="pXO2-34"/>
    <property type="match status" value="1"/>
</dbReference>
<name>Y6533_BACAN</name>
<geneLocation type="plasmid">
    <name>pXO2</name>
</geneLocation>